<dbReference type="EMBL" id="KQ136810">
    <property type="protein sequence ID" value="KNA21690.1"/>
    <property type="molecule type" value="Genomic_DNA"/>
</dbReference>
<dbReference type="PDB" id="4V61">
    <property type="method" value="EM"/>
    <property type="resolution" value="9.40 A"/>
    <property type="chains" value="J=46-86"/>
</dbReference>
<dbReference type="PDB" id="5H1S">
    <property type="method" value="EM"/>
    <property type="resolution" value="3.50 A"/>
    <property type="chains" value="J=42-196"/>
</dbReference>
<dbReference type="PDB" id="5MLC">
    <property type="method" value="EM"/>
    <property type="resolution" value="3.90 A"/>
    <property type="chains" value="I=1-196"/>
</dbReference>
<dbReference type="PDB" id="5MMI">
    <property type="method" value="EM"/>
    <property type="resolution" value="3.25 A"/>
    <property type="chains" value="H=1-196"/>
</dbReference>
<dbReference type="PDB" id="5MMM">
    <property type="method" value="EM"/>
    <property type="resolution" value="3.40 A"/>
    <property type="chains" value="H=1-196"/>
</dbReference>
<dbReference type="PDB" id="5X8P">
    <property type="method" value="EM"/>
    <property type="resolution" value="3.40 A"/>
    <property type="chains" value="H=42-196"/>
</dbReference>
<dbReference type="PDB" id="5X8T">
    <property type="method" value="EM"/>
    <property type="resolution" value="3.30 A"/>
    <property type="chains" value="H=42-196"/>
</dbReference>
<dbReference type="PDB" id="6ERI">
    <property type="method" value="EM"/>
    <property type="resolution" value="3.00 A"/>
    <property type="chains" value="AH=43-88"/>
</dbReference>
<dbReference type="PDBsum" id="4V61"/>
<dbReference type="PDBsum" id="5H1S"/>
<dbReference type="PDBsum" id="5MLC"/>
<dbReference type="PDBsum" id="5MMI"/>
<dbReference type="PDBsum" id="5MMM"/>
<dbReference type="PDBsum" id="5X8P"/>
<dbReference type="PDBsum" id="5X8T"/>
<dbReference type="PDBsum" id="6ERI"/>
<dbReference type="EMDB" id="EMD-3525"/>
<dbReference type="EMDB" id="EMD-3531"/>
<dbReference type="EMDB" id="EMD-3533"/>
<dbReference type="EMDB" id="EMD-3941"/>
<dbReference type="EMDB" id="EMD-6709"/>
<dbReference type="EMDB" id="EMD-6711"/>
<dbReference type="EMDB" id="EMD-9572"/>
<dbReference type="SMR" id="P82180"/>
<dbReference type="IntAct" id="P82180">
    <property type="interactions" value="1"/>
</dbReference>
<dbReference type="STRING" id="3562.P82180"/>
<dbReference type="OrthoDB" id="5555409at2759"/>
<dbReference type="Proteomes" id="UP001155700">
    <property type="component" value="Unplaced"/>
</dbReference>
<dbReference type="GO" id="GO:0009507">
    <property type="term" value="C:chloroplast"/>
    <property type="evidence" value="ECO:0007669"/>
    <property type="project" value="UniProtKB-SubCell"/>
</dbReference>
<dbReference type="GO" id="GO:0005739">
    <property type="term" value="C:mitochondrion"/>
    <property type="evidence" value="ECO:0000318"/>
    <property type="project" value="GO_Central"/>
</dbReference>
<dbReference type="GO" id="GO:1990904">
    <property type="term" value="C:ribonucleoprotein complex"/>
    <property type="evidence" value="ECO:0007669"/>
    <property type="project" value="UniProtKB-KW"/>
</dbReference>
<dbReference type="GO" id="GO:0005840">
    <property type="term" value="C:ribosome"/>
    <property type="evidence" value="ECO:0007669"/>
    <property type="project" value="UniProtKB-KW"/>
</dbReference>
<dbReference type="GO" id="GO:0019843">
    <property type="term" value="F:rRNA binding"/>
    <property type="evidence" value="ECO:0007669"/>
    <property type="project" value="UniProtKB-KW"/>
</dbReference>
<dbReference type="GO" id="GO:0003735">
    <property type="term" value="F:structural constituent of ribosome"/>
    <property type="evidence" value="ECO:0007669"/>
    <property type="project" value="InterPro"/>
</dbReference>
<dbReference type="GO" id="GO:0006412">
    <property type="term" value="P:translation"/>
    <property type="evidence" value="ECO:0007669"/>
    <property type="project" value="InterPro"/>
</dbReference>
<dbReference type="FunFam" id="3.10.430.100:FF:000005">
    <property type="entry name" value="50S ribosomal protein L9"/>
    <property type="match status" value="1"/>
</dbReference>
<dbReference type="FunFam" id="3.40.5.10:FF:000006">
    <property type="entry name" value="50S ribosomal protein L9, chloroplastic"/>
    <property type="match status" value="1"/>
</dbReference>
<dbReference type="Gene3D" id="3.10.430.100">
    <property type="entry name" value="Ribosomal protein L9, C-terminal domain"/>
    <property type="match status" value="1"/>
</dbReference>
<dbReference type="Gene3D" id="3.40.5.10">
    <property type="entry name" value="Ribosomal protein L9, N-terminal domain"/>
    <property type="match status" value="1"/>
</dbReference>
<dbReference type="HAMAP" id="MF_00503">
    <property type="entry name" value="Ribosomal_bL9"/>
    <property type="match status" value="1"/>
</dbReference>
<dbReference type="InterPro" id="IPR000244">
    <property type="entry name" value="Ribosomal_bL9"/>
</dbReference>
<dbReference type="InterPro" id="IPR009027">
    <property type="entry name" value="Ribosomal_bL9/RNase_H1_N"/>
</dbReference>
<dbReference type="InterPro" id="IPR020594">
    <property type="entry name" value="Ribosomal_bL9_bac/chp"/>
</dbReference>
<dbReference type="InterPro" id="IPR020069">
    <property type="entry name" value="Ribosomal_bL9_C"/>
</dbReference>
<dbReference type="InterPro" id="IPR036791">
    <property type="entry name" value="Ribosomal_bL9_C_sf"/>
</dbReference>
<dbReference type="InterPro" id="IPR020070">
    <property type="entry name" value="Ribosomal_bL9_N"/>
</dbReference>
<dbReference type="InterPro" id="IPR036935">
    <property type="entry name" value="Ribosomal_bL9_N_sf"/>
</dbReference>
<dbReference type="NCBIfam" id="TIGR00158">
    <property type="entry name" value="L9"/>
    <property type="match status" value="1"/>
</dbReference>
<dbReference type="PANTHER" id="PTHR21368">
    <property type="entry name" value="50S RIBOSOMAL PROTEIN L9"/>
    <property type="match status" value="1"/>
</dbReference>
<dbReference type="Pfam" id="PF03948">
    <property type="entry name" value="Ribosomal_L9_C"/>
    <property type="match status" value="1"/>
</dbReference>
<dbReference type="Pfam" id="PF01281">
    <property type="entry name" value="Ribosomal_L9_N"/>
    <property type="match status" value="1"/>
</dbReference>
<dbReference type="SUPFAM" id="SSF55658">
    <property type="entry name" value="L9 N-domain-like"/>
    <property type="match status" value="1"/>
</dbReference>
<dbReference type="SUPFAM" id="SSF55653">
    <property type="entry name" value="Ribosomal protein L9 C-domain"/>
    <property type="match status" value="1"/>
</dbReference>
<dbReference type="PROSITE" id="PS00651">
    <property type="entry name" value="RIBOSOMAL_L9"/>
    <property type="match status" value="1"/>
</dbReference>
<protein>
    <recommendedName>
        <fullName evidence="5">Large ribosomal subunit protein bL9c</fullName>
    </recommendedName>
    <alternativeName>
        <fullName evidence="4">50S ribosomal protein L9, chloroplastic</fullName>
    </alternativeName>
    <alternativeName>
        <fullName>CL9</fullName>
    </alternativeName>
</protein>
<comment type="function">
    <text evidence="7 8">Component of the chloroplast ribosome (chloro-ribosome), a dedicated translation machinery responsible for the synthesis of chloroplast genome-encoded proteins, including proteins of the transcription and translation machinery and components of the photosynthetic apparatus.</text>
</comment>
<comment type="subunit">
    <text evidence="2 3">Component of the chloroplast large ribosomal subunit (LSU). Mature 70S chloroplast ribosomes of higher plants consist of a small (30S) and a large (50S) subunit. The 30S small subunit contains 1 molecule of ribosomal RNA (16S rRNA) and 24 different proteins. The 50S large subunit contains 3 rRNA molecules (23S, 5S and 4.5S rRNA) and 33 different proteins.</text>
</comment>
<comment type="subcellular location">
    <subcellularLocation>
        <location evidence="2 3">Plastid</location>
        <location evidence="2 3">Chloroplast</location>
    </subcellularLocation>
</comment>
<comment type="mass spectrometry"/>
<comment type="similarity">
    <text evidence="1">Belongs to the bacterial ribosomal protein bL9 family.</text>
</comment>
<accession>P82180</accession>
<accession>A0A0K9RQ91</accession>
<gene>
    <name type="primary">RPL9</name>
    <name type="ORF">SOVF_040960</name>
</gene>
<keyword id="KW-0002">3D-structure</keyword>
<keyword id="KW-0150">Chloroplast</keyword>
<keyword id="KW-0903">Direct protein sequencing</keyword>
<keyword id="KW-0934">Plastid</keyword>
<keyword id="KW-1185">Reference proteome</keyword>
<keyword id="KW-0687">Ribonucleoprotein</keyword>
<keyword id="KW-0689">Ribosomal protein</keyword>
<keyword id="KW-0694">RNA-binding</keyword>
<keyword id="KW-0699">rRNA-binding</keyword>
<keyword id="KW-0809">Transit peptide</keyword>
<evidence type="ECO:0000255" key="1"/>
<evidence type="ECO:0000269" key="2">
    <source>
    </source>
</evidence>
<evidence type="ECO:0000269" key="3">
    <source>
    </source>
</evidence>
<evidence type="ECO:0000303" key="4">
    <source>
    </source>
</evidence>
<evidence type="ECO:0000303" key="5">
    <source>
    </source>
</evidence>
<evidence type="ECO:0000305" key="6"/>
<evidence type="ECO:0000305" key="7">
    <source>
    </source>
</evidence>
<evidence type="ECO:0000305" key="8">
    <source>
    </source>
</evidence>
<evidence type="ECO:0007829" key="9">
    <source>
        <dbReference type="PDB" id="5MMI"/>
    </source>
</evidence>
<evidence type="ECO:0007829" key="10">
    <source>
        <dbReference type="PDB" id="5X8T"/>
    </source>
</evidence>
<name>RK9_SPIOL</name>
<feature type="transit peptide" description="Chloroplast" evidence="2">
    <location>
        <begin position="1"/>
        <end position="41"/>
    </location>
</feature>
<feature type="chain" id="PRO_0000249861" description="Large ribosomal subunit protein bL9c">
    <location>
        <begin position="42"/>
        <end position="196"/>
    </location>
</feature>
<feature type="sequence conflict" description="In Ref. 2; AA sequence." evidence="6" ref="2">
    <original>L</original>
    <variation>P</variation>
    <location>
        <position position="81"/>
    </location>
</feature>
<feature type="sequence conflict" description="In Ref. 2; AA sequence." evidence="6" ref="2">
    <original>E</original>
    <variation>A</variation>
    <location>
        <position position="85"/>
    </location>
</feature>
<feature type="strand" evidence="9">
    <location>
        <begin position="49"/>
        <end position="55"/>
    </location>
</feature>
<feature type="turn" evidence="9">
    <location>
        <begin position="58"/>
        <end position="60"/>
    </location>
</feature>
<feature type="strand" evidence="9">
    <location>
        <begin position="61"/>
        <end position="69"/>
    </location>
</feature>
<feature type="helix" evidence="9">
    <location>
        <begin position="71"/>
        <end position="76"/>
    </location>
</feature>
<feature type="helix" evidence="9">
    <location>
        <begin position="79"/>
        <end position="81"/>
    </location>
</feature>
<feature type="strand" evidence="9">
    <location>
        <begin position="84"/>
        <end position="86"/>
    </location>
</feature>
<feature type="helix" evidence="10">
    <location>
        <begin position="89"/>
        <end position="92"/>
    </location>
</feature>
<sequence>MASTTSTLSLSWSNSFHSFAGAISEPQKSPENCRVMLPIVAQKKVKKIRKIILKEDIPDLGKKGQLLDVRAGFLRNFLLPLGKAEVVTPLLLKEMKMEDERIEAEKKRVKEEAQQLARMFETVGAFKVKRKGGKGKQIFGSVTAQDLVDIIKAQLQRDVDKKVVFLPDIRETGEYIAELKLHPDVTAQVRVTVFAN</sequence>
<reference key="1">
    <citation type="journal article" date="2014" name="Nature">
        <title>The genome of the recently domesticated crop plant sugar beet (Beta vulgaris).</title>
        <authorList>
            <person name="Dohm J.C."/>
            <person name="Minoche A.E."/>
            <person name="Holtgraewe D."/>
            <person name="Capella-Gutierrez S."/>
            <person name="Zakrzewski F."/>
            <person name="Tafer H."/>
            <person name="Rupp O."/>
            <person name="Soerensen T.R."/>
            <person name="Stracke R."/>
            <person name="Reinhardt R."/>
            <person name="Goesmann A."/>
            <person name="Kraft T."/>
            <person name="Schulz B."/>
            <person name="Stadler P.F."/>
            <person name="Schmidt T."/>
            <person name="Gabaldon T."/>
            <person name="Lehrach H."/>
            <person name="Weisshaar B."/>
            <person name="Himmelbauer H."/>
        </authorList>
    </citation>
    <scope>NUCLEOTIDE SEQUENCE [LARGE SCALE GENOMIC DNA]</scope>
    <source>
        <strain>cv. Viroflay</strain>
        <tissue>Leaf</tissue>
    </source>
</reference>
<reference key="2">
    <citation type="journal article" date="2000" name="J. Biol. Chem.">
        <title>The plastid ribosomal proteins. Identification of all the proteins in the 50S subunit of an organelle ribosome (chloroplast).</title>
        <authorList>
            <person name="Yamaguchi K."/>
            <person name="Subramanian A.R."/>
        </authorList>
    </citation>
    <scope>PROTEIN SEQUENCE OF 42-86</scope>
    <scope>SUBUNIT</scope>
    <scope>SUBCELLULAR LOCATION</scope>
    <scope>MASS SPECTROMETRY</scope>
    <source>
        <strain>cv. Alwaro</strain>
        <tissue>Leaf</tissue>
    </source>
</reference>
<reference key="3">
    <citation type="journal article" date="2007" name="Proc. Natl. Acad. Sci. U.S.A.">
        <title>Cryo-EM study of the spinach chloroplast ribosome reveals the structural and functional roles of plastid-specific ribosomal proteins.</title>
        <authorList>
            <person name="Sharma M.R."/>
            <person name="Wilson D.N."/>
            <person name="Datta P.P."/>
            <person name="Barat C."/>
            <person name="Schluenzen F."/>
            <person name="Fucini P."/>
            <person name="Agrawal R.K."/>
        </authorList>
    </citation>
    <scope>STRUCTURE BY ELECTRON MICROSCOPY (9.4 ANGSTROMS)</scope>
</reference>
<reference key="4">
    <citation type="journal article" date="2016" name="Sci. Rep.">
        <title>Cryo-EM structure of the large subunit of the spinach chloroplast ribosome.</title>
        <authorList>
            <person name="Ahmed T."/>
            <person name="Yin Z."/>
            <person name="Bhushan S."/>
        </authorList>
    </citation>
    <scope>STRUCTURE BY ELECTRON MICROSCOPY (3.50 ANGSTROMS)</scope>
</reference>
<reference key="5">
    <citation type="journal article" date="2017" name="EMBO J.">
        <title>The complete structure of the chloroplast 70S ribosome in complex with translation factor pY.</title>
        <authorList>
            <person name="Bieri P."/>
            <person name="Leibundgut M."/>
            <person name="Saurer M."/>
            <person name="Boehringer D."/>
            <person name="Ban N."/>
        </authorList>
    </citation>
    <scope>STRUCTURE BY ELECTRON MICROSCOPY (3.25 ANGSTROMS)</scope>
    <scope>SUBUNIT</scope>
    <scope>SUBCELLULAR LOCATION</scope>
</reference>
<organism>
    <name type="scientific">Spinacia oleracea</name>
    <name type="common">Spinach</name>
    <dbReference type="NCBI Taxonomy" id="3562"/>
    <lineage>
        <taxon>Eukaryota</taxon>
        <taxon>Viridiplantae</taxon>
        <taxon>Streptophyta</taxon>
        <taxon>Embryophyta</taxon>
        <taxon>Tracheophyta</taxon>
        <taxon>Spermatophyta</taxon>
        <taxon>Magnoliopsida</taxon>
        <taxon>eudicotyledons</taxon>
        <taxon>Gunneridae</taxon>
        <taxon>Pentapetalae</taxon>
        <taxon>Caryophyllales</taxon>
        <taxon>Chenopodiaceae</taxon>
        <taxon>Chenopodioideae</taxon>
        <taxon>Anserineae</taxon>
        <taxon>Spinacia</taxon>
    </lineage>
</organism>
<proteinExistence type="evidence at protein level"/>